<proteinExistence type="inferred from homology"/>
<accession>Q1R6F9</accession>
<comment type="function">
    <text evidence="1">Specifically methylates the uridine in position 2552 of 23S rRNA at the 2'-O position of the ribose in the fully assembled 50S ribosomal subunit.</text>
</comment>
<comment type="catalytic activity">
    <reaction evidence="1">
        <text>uridine(2552) in 23S rRNA + S-adenosyl-L-methionine = 2'-O-methyluridine(2552) in 23S rRNA + S-adenosyl-L-homocysteine + H(+)</text>
        <dbReference type="Rhea" id="RHEA:42720"/>
        <dbReference type="Rhea" id="RHEA-COMP:10202"/>
        <dbReference type="Rhea" id="RHEA-COMP:10203"/>
        <dbReference type="ChEBI" id="CHEBI:15378"/>
        <dbReference type="ChEBI" id="CHEBI:57856"/>
        <dbReference type="ChEBI" id="CHEBI:59789"/>
        <dbReference type="ChEBI" id="CHEBI:65315"/>
        <dbReference type="ChEBI" id="CHEBI:74478"/>
        <dbReference type="EC" id="2.1.1.166"/>
    </reaction>
</comment>
<comment type="subcellular location">
    <subcellularLocation>
        <location evidence="1">Cytoplasm</location>
    </subcellularLocation>
</comment>
<comment type="similarity">
    <text evidence="1">Belongs to the class I-like SAM-binding methyltransferase superfamily. RNA methyltransferase RlmE family.</text>
</comment>
<gene>
    <name evidence="1" type="primary">rlmE</name>
    <name evidence="1" type="synonym">ftsJ</name>
    <name evidence="1" type="synonym">rrmJ</name>
    <name type="ordered locus">UTI89_C3611</name>
</gene>
<name>RLME_ECOUT</name>
<keyword id="KW-0963">Cytoplasm</keyword>
<keyword id="KW-0489">Methyltransferase</keyword>
<keyword id="KW-0698">rRNA processing</keyword>
<keyword id="KW-0949">S-adenosyl-L-methionine</keyword>
<keyword id="KW-0808">Transferase</keyword>
<sequence>MTGKKRSASSSRWLQEHFSDKYVQQAQKKGLRSRAWFKLDEIQQSDKLFKPGMTVVDLGAAPGGWSQYVVTQIGGKGRIIACDLLPMDPIVGVDFLQGDFRDELVMKALLERVGDSKVQVVMSDMAPNMSGTPAVDIPRAMYLVELALEMCRDVLAPGGSFVVKVFQGEGFDEYLREIRSLFTKVKVRKPDSSRARSREVYIVATGRKP</sequence>
<feature type="chain" id="PRO_0000282743" description="Ribosomal RNA large subunit methyltransferase E">
    <location>
        <begin position="1"/>
        <end position="209"/>
    </location>
</feature>
<feature type="active site" description="Proton acceptor" evidence="1">
    <location>
        <position position="164"/>
    </location>
</feature>
<feature type="binding site" evidence="1">
    <location>
        <position position="63"/>
    </location>
    <ligand>
        <name>S-adenosyl-L-methionine</name>
        <dbReference type="ChEBI" id="CHEBI:59789"/>
    </ligand>
</feature>
<feature type="binding site" evidence="1">
    <location>
        <position position="65"/>
    </location>
    <ligand>
        <name>S-adenosyl-L-methionine</name>
        <dbReference type="ChEBI" id="CHEBI:59789"/>
    </ligand>
</feature>
<feature type="binding site" evidence="1">
    <location>
        <position position="83"/>
    </location>
    <ligand>
        <name>S-adenosyl-L-methionine</name>
        <dbReference type="ChEBI" id="CHEBI:59789"/>
    </ligand>
</feature>
<feature type="binding site" evidence="1">
    <location>
        <position position="99"/>
    </location>
    <ligand>
        <name>S-adenosyl-L-methionine</name>
        <dbReference type="ChEBI" id="CHEBI:59789"/>
    </ligand>
</feature>
<feature type="binding site" evidence="1">
    <location>
        <position position="124"/>
    </location>
    <ligand>
        <name>S-adenosyl-L-methionine</name>
        <dbReference type="ChEBI" id="CHEBI:59789"/>
    </ligand>
</feature>
<reference key="1">
    <citation type="journal article" date="2006" name="Proc. Natl. Acad. Sci. U.S.A.">
        <title>Identification of genes subject to positive selection in uropathogenic strains of Escherichia coli: a comparative genomics approach.</title>
        <authorList>
            <person name="Chen S.L."/>
            <person name="Hung C.-S."/>
            <person name="Xu J."/>
            <person name="Reigstad C.S."/>
            <person name="Magrini V."/>
            <person name="Sabo A."/>
            <person name="Blasiar D."/>
            <person name="Bieri T."/>
            <person name="Meyer R.R."/>
            <person name="Ozersky P."/>
            <person name="Armstrong J.R."/>
            <person name="Fulton R.S."/>
            <person name="Latreille J.P."/>
            <person name="Spieth J."/>
            <person name="Hooton T.M."/>
            <person name="Mardis E.R."/>
            <person name="Hultgren S.J."/>
            <person name="Gordon J.I."/>
        </authorList>
    </citation>
    <scope>NUCLEOTIDE SEQUENCE [LARGE SCALE GENOMIC DNA]</scope>
    <source>
        <strain>UTI89 / UPEC</strain>
    </source>
</reference>
<organism>
    <name type="scientific">Escherichia coli (strain UTI89 / UPEC)</name>
    <dbReference type="NCBI Taxonomy" id="364106"/>
    <lineage>
        <taxon>Bacteria</taxon>
        <taxon>Pseudomonadati</taxon>
        <taxon>Pseudomonadota</taxon>
        <taxon>Gammaproteobacteria</taxon>
        <taxon>Enterobacterales</taxon>
        <taxon>Enterobacteriaceae</taxon>
        <taxon>Escherichia</taxon>
    </lineage>
</organism>
<dbReference type="EC" id="2.1.1.166" evidence="1"/>
<dbReference type="EMBL" id="CP000243">
    <property type="protein sequence ID" value="ABE09055.1"/>
    <property type="molecule type" value="Genomic_DNA"/>
</dbReference>
<dbReference type="RefSeq" id="WP_000145975.1">
    <property type="nucleotide sequence ID" value="NZ_CP064825.1"/>
</dbReference>
<dbReference type="SMR" id="Q1R6F9"/>
<dbReference type="GeneID" id="93778802"/>
<dbReference type="KEGG" id="eci:UTI89_C3611"/>
<dbReference type="HOGENOM" id="CLU_009422_4_0_6"/>
<dbReference type="Proteomes" id="UP000001952">
    <property type="component" value="Chromosome"/>
</dbReference>
<dbReference type="GO" id="GO:0005737">
    <property type="term" value="C:cytoplasm"/>
    <property type="evidence" value="ECO:0007669"/>
    <property type="project" value="UniProtKB-SubCell"/>
</dbReference>
<dbReference type="GO" id="GO:0008650">
    <property type="term" value="F:rRNA (uridine-2'-O-)-methyltransferase activity"/>
    <property type="evidence" value="ECO:0007669"/>
    <property type="project" value="UniProtKB-UniRule"/>
</dbReference>
<dbReference type="CDD" id="cd02440">
    <property type="entry name" value="AdoMet_MTases"/>
    <property type="match status" value="1"/>
</dbReference>
<dbReference type="FunFam" id="3.40.50.150:FF:000005">
    <property type="entry name" value="Ribosomal RNA large subunit methyltransferase E"/>
    <property type="match status" value="1"/>
</dbReference>
<dbReference type="Gene3D" id="3.40.50.150">
    <property type="entry name" value="Vaccinia Virus protein VP39"/>
    <property type="match status" value="1"/>
</dbReference>
<dbReference type="HAMAP" id="MF_01547">
    <property type="entry name" value="RNA_methyltr_E"/>
    <property type="match status" value="1"/>
</dbReference>
<dbReference type="InterPro" id="IPR050082">
    <property type="entry name" value="RNA_methyltr_RlmE"/>
</dbReference>
<dbReference type="InterPro" id="IPR002877">
    <property type="entry name" value="RNA_MeTrfase_FtsJ_dom"/>
</dbReference>
<dbReference type="InterPro" id="IPR015507">
    <property type="entry name" value="rRNA-MeTfrase_E"/>
</dbReference>
<dbReference type="InterPro" id="IPR004512">
    <property type="entry name" value="rRNA_MeTrfase_gammaproteobac"/>
</dbReference>
<dbReference type="InterPro" id="IPR029063">
    <property type="entry name" value="SAM-dependent_MTases_sf"/>
</dbReference>
<dbReference type="NCBIfam" id="NF008390">
    <property type="entry name" value="PRK11188.1"/>
    <property type="match status" value="1"/>
</dbReference>
<dbReference type="NCBIfam" id="TIGR00438">
    <property type="entry name" value="rrmJ"/>
    <property type="match status" value="1"/>
</dbReference>
<dbReference type="PANTHER" id="PTHR10920">
    <property type="entry name" value="RIBOSOMAL RNA METHYLTRANSFERASE"/>
    <property type="match status" value="1"/>
</dbReference>
<dbReference type="PANTHER" id="PTHR10920:SF18">
    <property type="entry name" value="RRNA METHYLTRANSFERASE 2, MITOCHONDRIAL"/>
    <property type="match status" value="1"/>
</dbReference>
<dbReference type="Pfam" id="PF01728">
    <property type="entry name" value="FtsJ"/>
    <property type="match status" value="1"/>
</dbReference>
<dbReference type="PIRSF" id="PIRSF005461">
    <property type="entry name" value="23S_rRNA_mtase"/>
    <property type="match status" value="1"/>
</dbReference>
<dbReference type="SUPFAM" id="SSF53335">
    <property type="entry name" value="S-adenosyl-L-methionine-dependent methyltransferases"/>
    <property type="match status" value="1"/>
</dbReference>
<evidence type="ECO:0000255" key="1">
    <source>
        <dbReference type="HAMAP-Rule" id="MF_01547"/>
    </source>
</evidence>
<protein>
    <recommendedName>
        <fullName evidence="1">Ribosomal RNA large subunit methyltransferase E</fullName>
        <ecNumber evidence="1">2.1.1.166</ecNumber>
    </recommendedName>
    <alternativeName>
        <fullName evidence="1">23S rRNA Um2552 methyltransferase</fullName>
    </alternativeName>
    <alternativeName>
        <fullName evidence="1">rRNA (uridine-2'-O-)-methyltransferase</fullName>
    </alternativeName>
</protein>